<comment type="function">
    <text evidence="2">Cell wall formation.</text>
</comment>
<comment type="catalytic activity">
    <reaction evidence="2">
        <text>2 D-alanine + ATP = D-alanyl-D-alanine + ADP + phosphate + H(+)</text>
        <dbReference type="Rhea" id="RHEA:11224"/>
        <dbReference type="ChEBI" id="CHEBI:15378"/>
        <dbReference type="ChEBI" id="CHEBI:30616"/>
        <dbReference type="ChEBI" id="CHEBI:43474"/>
        <dbReference type="ChEBI" id="CHEBI:57416"/>
        <dbReference type="ChEBI" id="CHEBI:57822"/>
        <dbReference type="ChEBI" id="CHEBI:456216"/>
        <dbReference type="EC" id="6.3.2.4"/>
    </reaction>
</comment>
<comment type="cofactor">
    <cofactor evidence="1">
        <name>Mg(2+)</name>
        <dbReference type="ChEBI" id="CHEBI:18420"/>
    </cofactor>
    <cofactor evidence="1">
        <name>Mn(2+)</name>
        <dbReference type="ChEBI" id="CHEBI:29035"/>
    </cofactor>
    <text evidence="1">Binds 2 magnesium or manganese ions per subunit.</text>
</comment>
<comment type="pathway">
    <text evidence="2">Cell wall biogenesis; peptidoglycan biosynthesis.</text>
</comment>
<comment type="subcellular location">
    <subcellularLocation>
        <location evidence="2">Cytoplasm</location>
    </subcellularLocation>
</comment>
<comment type="similarity">
    <text evidence="2">Belongs to the D-alanine--D-alanine ligase family.</text>
</comment>
<name>DDL_RICBR</name>
<sequence length="321" mass="35849">MHKYQTHWVESSEIKILSDKGKKHIALVAGGMSAEREVSLISAEGVGKALIEAGYKVTFIDMGADITVKLHEIKPDIVFNCLHGTYGEDGCLPGLLNIMRIPYTHSGVLASSLAFDKVHSRSWFLTNNINMAESIVISKGDNIKTDPIKRPYVIKPFTQGSSIGVEVIFEEDDFNFANYDFPYGDEVIIEKYIKGRELQVAILNGKALGALEIKLLKNRFYDYETKYTEGFAEHLCPAPLPTDIYDKLLKESEKIYNTMNCKGAARVEFILEDGTNKLYALEINTHPGMTPLSIVPEIAAYHGIDFVNLIEEILKTASFES</sequence>
<reference key="1">
    <citation type="journal article" date="2006" name="PLoS Genet.">
        <title>Genome sequence of Rickettsia bellii illuminates the role of amoebae in gene exchanges between intracellular pathogens.</title>
        <authorList>
            <person name="Ogata H."/>
            <person name="La Scola B."/>
            <person name="Audic S."/>
            <person name="Renesto P."/>
            <person name="Blanc G."/>
            <person name="Robert C."/>
            <person name="Fournier P.-E."/>
            <person name="Claverie J.-M."/>
            <person name="Raoult D."/>
        </authorList>
    </citation>
    <scope>NUCLEOTIDE SEQUENCE [LARGE SCALE GENOMIC DNA]</scope>
    <source>
        <strain>RML369-C</strain>
    </source>
</reference>
<evidence type="ECO:0000250" key="1"/>
<evidence type="ECO:0000255" key="2">
    <source>
        <dbReference type="HAMAP-Rule" id="MF_00047"/>
    </source>
</evidence>
<protein>
    <recommendedName>
        <fullName evidence="2">D-alanine--D-alanine ligase</fullName>
        <ecNumber evidence="2">6.3.2.4</ecNumber>
    </recommendedName>
    <alternativeName>
        <fullName evidence="2">D-Ala-D-Ala ligase</fullName>
    </alternativeName>
    <alternativeName>
        <fullName evidence="2">D-alanylalanine synthetase</fullName>
    </alternativeName>
</protein>
<feature type="chain" id="PRO_0000277917" description="D-alanine--D-alanine ligase">
    <location>
        <begin position="1"/>
        <end position="321"/>
    </location>
</feature>
<feature type="domain" description="ATP-grasp" evidence="2">
    <location>
        <begin position="121"/>
        <end position="315"/>
    </location>
</feature>
<feature type="binding site" evidence="2">
    <location>
        <begin position="148"/>
        <end position="199"/>
    </location>
    <ligand>
        <name>ATP</name>
        <dbReference type="ChEBI" id="CHEBI:30616"/>
    </ligand>
</feature>
<feature type="binding site" evidence="2">
    <location>
        <position position="268"/>
    </location>
    <ligand>
        <name>Mg(2+)</name>
        <dbReference type="ChEBI" id="CHEBI:18420"/>
        <label>1</label>
    </ligand>
</feature>
<feature type="binding site" evidence="2">
    <location>
        <position position="282"/>
    </location>
    <ligand>
        <name>Mg(2+)</name>
        <dbReference type="ChEBI" id="CHEBI:18420"/>
        <label>1</label>
    </ligand>
</feature>
<feature type="binding site" evidence="2">
    <location>
        <position position="282"/>
    </location>
    <ligand>
        <name>Mg(2+)</name>
        <dbReference type="ChEBI" id="CHEBI:18420"/>
        <label>2</label>
    </ligand>
</feature>
<feature type="binding site" evidence="2">
    <location>
        <position position="284"/>
    </location>
    <ligand>
        <name>Mg(2+)</name>
        <dbReference type="ChEBI" id="CHEBI:18420"/>
        <label>2</label>
    </ligand>
</feature>
<organism>
    <name type="scientific">Rickettsia bellii (strain RML369-C)</name>
    <dbReference type="NCBI Taxonomy" id="336407"/>
    <lineage>
        <taxon>Bacteria</taxon>
        <taxon>Pseudomonadati</taxon>
        <taxon>Pseudomonadota</taxon>
        <taxon>Alphaproteobacteria</taxon>
        <taxon>Rickettsiales</taxon>
        <taxon>Rickettsiaceae</taxon>
        <taxon>Rickettsieae</taxon>
        <taxon>Rickettsia</taxon>
        <taxon>belli group</taxon>
    </lineage>
</organism>
<keyword id="KW-0067">ATP-binding</keyword>
<keyword id="KW-0133">Cell shape</keyword>
<keyword id="KW-0961">Cell wall biogenesis/degradation</keyword>
<keyword id="KW-0963">Cytoplasm</keyword>
<keyword id="KW-0436">Ligase</keyword>
<keyword id="KW-0460">Magnesium</keyword>
<keyword id="KW-0464">Manganese</keyword>
<keyword id="KW-0479">Metal-binding</keyword>
<keyword id="KW-0547">Nucleotide-binding</keyword>
<keyword id="KW-0573">Peptidoglycan synthesis</keyword>
<gene>
    <name evidence="2" type="primary">ddl</name>
    <name type="ordered locus">RBE_0961</name>
</gene>
<accession>Q1RHX2</accession>
<dbReference type="EC" id="6.3.2.4" evidence="2"/>
<dbReference type="EMBL" id="CP000087">
    <property type="protein sequence ID" value="ABE05042.1"/>
    <property type="molecule type" value="Genomic_DNA"/>
</dbReference>
<dbReference type="RefSeq" id="WP_011477622.1">
    <property type="nucleotide sequence ID" value="NC_007940.1"/>
</dbReference>
<dbReference type="SMR" id="Q1RHX2"/>
<dbReference type="KEGG" id="rbe:RBE_0961"/>
<dbReference type="eggNOG" id="COG1181">
    <property type="taxonomic scope" value="Bacteria"/>
</dbReference>
<dbReference type="HOGENOM" id="CLU_039268_1_1_5"/>
<dbReference type="OrthoDB" id="9813261at2"/>
<dbReference type="UniPathway" id="UPA00219"/>
<dbReference type="Proteomes" id="UP000001951">
    <property type="component" value="Chromosome"/>
</dbReference>
<dbReference type="GO" id="GO:0005737">
    <property type="term" value="C:cytoplasm"/>
    <property type="evidence" value="ECO:0007669"/>
    <property type="project" value="UniProtKB-SubCell"/>
</dbReference>
<dbReference type="GO" id="GO:0005524">
    <property type="term" value="F:ATP binding"/>
    <property type="evidence" value="ECO:0007669"/>
    <property type="project" value="UniProtKB-KW"/>
</dbReference>
<dbReference type="GO" id="GO:0008716">
    <property type="term" value="F:D-alanine-D-alanine ligase activity"/>
    <property type="evidence" value="ECO:0007669"/>
    <property type="project" value="UniProtKB-UniRule"/>
</dbReference>
<dbReference type="GO" id="GO:0046872">
    <property type="term" value="F:metal ion binding"/>
    <property type="evidence" value="ECO:0007669"/>
    <property type="project" value="UniProtKB-KW"/>
</dbReference>
<dbReference type="GO" id="GO:0071555">
    <property type="term" value="P:cell wall organization"/>
    <property type="evidence" value="ECO:0007669"/>
    <property type="project" value="UniProtKB-KW"/>
</dbReference>
<dbReference type="GO" id="GO:0009252">
    <property type="term" value="P:peptidoglycan biosynthetic process"/>
    <property type="evidence" value="ECO:0007669"/>
    <property type="project" value="UniProtKB-UniRule"/>
</dbReference>
<dbReference type="GO" id="GO:0008360">
    <property type="term" value="P:regulation of cell shape"/>
    <property type="evidence" value="ECO:0007669"/>
    <property type="project" value="UniProtKB-KW"/>
</dbReference>
<dbReference type="Gene3D" id="3.40.50.20">
    <property type="match status" value="1"/>
</dbReference>
<dbReference type="Gene3D" id="3.30.1490.20">
    <property type="entry name" value="ATP-grasp fold, A domain"/>
    <property type="match status" value="1"/>
</dbReference>
<dbReference type="Gene3D" id="3.30.470.20">
    <property type="entry name" value="ATP-grasp fold, B domain"/>
    <property type="match status" value="1"/>
</dbReference>
<dbReference type="HAMAP" id="MF_00047">
    <property type="entry name" value="Dala_Dala_lig"/>
    <property type="match status" value="1"/>
</dbReference>
<dbReference type="InterPro" id="IPR011761">
    <property type="entry name" value="ATP-grasp"/>
</dbReference>
<dbReference type="InterPro" id="IPR013815">
    <property type="entry name" value="ATP_grasp_subdomain_1"/>
</dbReference>
<dbReference type="InterPro" id="IPR000291">
    <property type="entry name" value="D-Ala_lig_Van_CS"/>
</dbReference>
<dbReference type="InterPro" id="IPR005905">
    <property type="entry name" value="D_ala_D_ala"/>
</dbReference>
<dbReference type="InterPro" id="IPR011095">
    <property type="entry name" value="Dala_Dala_lig_C"/>
</dbReference>
<dbReference type="InterPro" id="IPR011127">
    <property type="entry name" value="Dala_Dala_lig_N"/>
</dbReference>
<dbReference type="InterPro" id="IPR016185">
    <property type="entry name" value="PreATP-grasp_dom_sf"/>
</dbReference>
<dbReference type="NCBIfam" id="TIGR01205">
    <property type="entry name" value="D_ala_D_alaTIGR"/>
    <property type="match status" value="1"/>
</dbReference>
<dbReference type="NCBIfam" id="NF002378">
    <property type="entry name" value="PRK01372.1"/>
    <property type="match status" value="1"/>
</dbReference>
<dbReference type="PANTHER" id="PTHR23132">
    <property type="entry name" value="D-ALANINE--D-ALANINE LIGASE"/>
    <property type="match status" value="1"/>
</dbReference>
<dbReference type="PANTHER" id="PTHR23132:SF23">
    <property type="entry name" value="D-ALANINE--D-ALANINE LIGASE B"/>
    <property type="match status" value="1"/>
</dbReference>
<dbReference type="Pfam" id="PF07478">
    <property type="entry name" value="Dala_Dala_lig_C"/>
    <property type="match status" value="1"/>
</dbReference>
<dbReference type="Pfam" id="PF01820">
    <property type="entry name" value="Dala_Dala_lig_N"/>
    <property type="match status" value="1"/>
</dbReference>
<dbReference type="PIRSF" id="PIRSF039102">
    <property type="entry name" value="Ddl/VanB"/>
    <property type="match status" value="1"/>
</dbReference>
<dbReference type="SUPFAM" id="SSF56059">
    <property type="entry name" value="Glutathione synthetase ATP-binding domain-like"/>
    <property type="match status" value="1"/>
</dbReference>
<dbReference type="SUPFAM" id="SSF52440">
    <property type="entry name" value="PreATP-grasp domain"/>
    <property type="match status" value="1"/>
</dbReference>
<dbReference type="PROSITE" id="PS50975">
    <property type="entry name" value="ATP_GRASP"/>
    <property type="match status" value="1"/>
</dbReference>
<dbReference type="PROSITE" id="PS00843">
    <property type="entry name" value="DALA_DALA_LIGASE_1"/>
    <property type="match status" value="1"/>
</dbReference>
<dbReference type="PROSITE" id="PS00844">
    <property type="entry name" value="DALA_DALA_LIGASE_2"/>
    <property type="match status" value="1"/>
</dbReference>
<proteinExistence type="inferred from homology"/>